<proteinExistence type="inferred from homology"/>
<dbReference type="EMBL" id="AE000516">
    <property type="protein sequence ID" value="AAK46129.1"/>
    <property type="molecule type" value="Genomic_DNA"/>
</dbReference>
<dbReference type="PIR" id="A70932">
    <property type="entry name" value="A70932"/>
</dbReference>
<dbReference type="RefSeq" id="WP_003906680.1">
    <property type="nucleotide sequence ID" value="NZ_KK341227.1"/>
</dbReference>
<dbReference type="SMR" id="P9WI04"/>
<dbReference type="KEGG" id="mtc:MT1856.1"/>
<dbReference type="PATRIC" id="fig|83331.31.peg.1998"/>
<dbReference type="HOGENOM" id="CLU_000243_0_1_11"/>
<dbReference type="Proteomes" id="UP000001020">
    <property type="component" value="Chromosome"/>
</dbReference>
<dbReference type="GO" id="GO:0009986">
    <property type="term" value="C:cell surface"/>
    <property type="evidence" value="ECO:0007669"/>
    <property type="project" value="UniProtKB-SubCell"/>
</dbReference>
<dbReference type="GO" id="GO:0052572">
    <property type="term" value="P:response to host immune response"/>
    <property type="evidence" value="ECO:0007669"/>
    <property type="project" value="TreeGrafter"/>
</dbReference>
<dbReference type="FunFam" id="1.20.1260.20:FF:000001">
    <property type="entry name" value="PPE family protein PPE41"/>
    <property type="match status" value="1"/>
</dbReference>
<dbReference type="Gene3D" id="1.20.1260.20">
    <property type="entry name" value="PPE superfamily"/>
    <property type="match status" value="1"/>
</dbReference>
<dbReference type="InterPro" id="IPR022171">
    <property type="entry name" value="PPE_C"/>
</dbReference>
<dbReference type="InterPro" id="IPR000030">
    <property type="entry name" value="PPE_dom"/>
</dbReference>
<dbReference type="InterPro" id="IPR038332">
    <property type="entry name" value="PPE_sf"/>
</dbReference>
<dbReference type="PANTHER" id="PTHR46766">
    <property type="entry name" value="GLUTAMINE-RICH PROTEIN 2"/>
    <property type="match status" value="1"/>
</dbReference>
<dbReference type="PANTHER" id="PTHR46766:SF1">
    <property type="entry name" value="GLUTAMINE-RICH PROTEIN 2"/>
    <property type="match status" value="1"/>
</dbReference>
<dbReference type="Pfam" id="PF00823">
    <property type="entry name" value="PPE"/>
    <property type="match status" value="1"/>
</dbReference>
<dbReference type="Pfam" id="PF12484">
    <property type="entry name" value="PPE-SVP"/>
    <property type="match status" value="1"/>
</dbReference>
<dbReference type="SUPFAM" id="SSF140459">
    <property type="entry name" value="PE/PPE dimer-like"/>
    <property type="match status" value="1"/>
</dbReference>
<accession>P9WI04</accession>
<accession>L0TAN8</accession>
<accession>Q79FJ6</accession>
<accession>Q7D7X4</accession>
<reference key="1">
    <citation type="journal article" date="2002" name="J. Bacteriol.">
        <title>Whole-genome comparison of Mycobacterium tuberculosis clinical and laboratory strains.</title>
        <authorList>
            <person name="Fleischmann R.D."/>
            <person name="Alland D."/>
            <person name="Eisen J.A."/>
            <person name="Carpenter L."/>
            <person name="White O."/>
            <person name="Peterson J.D."/>
            <person name="DeBoy R.T."/>
            <person name="Dodson R.J."/>
            <person name="Gwinn M.L."/>
            <person name="Haft D.H."/>
            <person name="Hickey E.K."/>
            <person name="Kolonay J.F."/>
            <person name="Nelson W.C."/>
            <person name="Umayam L.A."/>
            <person name="Ermolaeva M.D."/>
            <person name="Salzberg S.L."/>
            <person name="Delcher A."/>
            <person name="Utterback T.R."/>
            <person name="Weidman J.F."/>
            <person name="Khouri H.M."/>
            <person name="Gill J."/>
            <person name="Mikula A."/>
            <person name="Bishai W."/>
            <person name="Jacobs W.R. Jr."/>
            <person name="Venter J.C."/>
            <person name="Fraser C.M."/>
        </authorList>
    </citation>
    <scope>NUCLEOTIDE SEQUENCE [LARGE SCALE GENOMIC DNA]</scope>
    <source>
        <strain>CDC 1551 / Oshkosh</strain>
    </source>
</reference>
<protein>
    <recommendedName>
        <fullName evidence="1">PPE family protein PPE32</fullName>
    </recommendedName>
</protein>
<name>PPE32_MYCTO</name>
<organism>
    <name type="scientific">Mycobacterium tuberculosis (strain CDC 1551 / Oshkosh)</name>
    <dbReference type="NCBI Taxonomy" id="83331"/>
    <lineage>
        <taxon>Bacteria</taxon>
        <taxon>Bacillati</taxon>
        <taxon>Actinomycetota</taxon>
        <taxon>Actinomycetes</taxon>
        <taxon>Mycobacteriales</taxon>
        <taxon>Mycobacteriaceae</taxon>
        <taxon>Mycobacterium</taxon>
        <taxon>Mycobacterium tuberculosis complex</taxon>
    </lineage>
</organism>
<keyword id="KW-0134">Cell wall</keyword>
<keyword id="KW-1185">Reference proteome</keyword>
<keyword id="KW-0964">Secreted</keyword>
<keyword id="KW-0843">Virulence</keyword>
<gene>
    <name evidence="1" type="primary">PPE32</name>
    <name evidence="3" type="ordered locus">MT1856.1</name>
</gene>
<comment type="function">
    <text evidence="1">Virulence factor that modulates the production of host cytokines.</text>
</comment>
<comment type="subunit">
    <text evidence="1">Interacts with host Toll-like receptor 2 (TLR2).</text>
</comment>
<comment type="subcellular location">
    <subcellularLocation>
        <location evidence="1">Secreted</location>
        <location evidence="1">Cell wall</location>
    </subcellularLocation>
    <subcellularLocation>
        <location evidence="1">Cell surface</location>
    </subcellularLocation>
</comment>
<comment type="similarity">
    <text evidence="2">Belongs to the mycobacterial PPE family.</text>
</comment>
<feature type="chain" id="PRO_0000428091" description="PPE family protein PPE32">
    <location>
        <begin position="1"/>
        <end position="409"/>
    </location>
</feature>
<sequence>MDFGALPPEINSGRMYAGPGSGPLLAAAAAWDALAAELYSAAASYGSTIEGLTVAPWMGPSSITMAAAVAPYVAWISVTAGQAEQAGAQAKIAAGVYETAFAATVPPPVIEANRALLMSLVATNIFGQNTPAIAATEAHYAEMWAQDAAAMYGYAGSSATASQLAPFSEPPQTTNPSATAAQSAVVAQAAGAAASSDITAQLSQLISLLPSTLQSLATTATATSASAGWDTVLQSITTILANLTGPYSIIGLGAIPGGWWLTFGQILGLAQNAPGVAALLGPKAAAGALSPLAPLRGGYIGDITPLGGGATGGIARAIYVGSLSVPQGWAEAAPVMRAVASVLPGTGAAPALAAEAPGALFGEMALSSLAGRALAGTAVRSGAGAARVAGGSVTEDVASTTTIIVIPAD</sequence>
<evidence type="ECO:0000250" key="1">
    <source>
        <dbReference type="UniProtKB" id="P9WI05"/>
    </source>
</evidence>
<evidence type="ECO:0000305" key="2"/>
<evidence type="ECO:0000312" key="3">
    <source>
        <dbReference type="EMBL" id="AAK46129.1"/>
    </source>
</evidence>